<organism>
    <name type="scientific">Sus scrofa</name>
    <name type="common">Pig</name>
    <dbReference type="NCBI Taxonomy" id="9823"/>
    <lineage>
        <taxon>Eukaryota</taxon>
        <taxon>Metazoa</taxon>
        <taxon>Chordata</taxon>
        <taxon>Craniata</taxon>
        <taxon>Vertebrata</taxon>
        <taxon>Euteleostomi</taxon>
        <taxon>Mammalia</taxon>
        <taxon>Eutheria</taxon>
        <taxon>Laurasiatheria</taxon>
        <taxon>Artiodactyla</taxon>
        <taxon>Suina</taxon>
        <taxon>Suidae</taxon>
        <taxon>Sus</taxon>
    </lineage>
</organism>
<sequence>MQMNFSGLRALVTGAGKGIGRDTVKALHVSGARVVAVTRTNGDLVSLSQECPGIEPVCVDLGDWEATERALGGVGPVDLLVNNAAVALMQPFLDTTKEVFDRSFNVNLRSVFQVSQIVARSMIERGVPGSIVNVSSMVSHVTYPGLAAYSSTKGAMTMLTKSMAMELGPHKIRVNSVNPTVVLTAMGRSVTSDPELARKLKERHPMRKFAEVEDVVNSILFLLSDRSASTSGSSIFVDAGYLAS</sequence>
<proteinExistence type="evidence at protein level"/>
<keyword id="KW-0021">Allosteric enzyme</keyword>
<keyword id="KW-0903">Direct protein sequencing</keyword>
<keyword id="KW-0496">Mitochondrion</keyword>
<keyword id="KW-0520">NAD</keyword>
<keyword id="KW-0521">NADP</keyword>
<keyword id="KW-0560">Oxidoreductase</keyword>
<keyword id="KW-0597">Phosphoprotein</keyword>
<keyword id="KW-1185">Reference proteome</keyword>
<feature type="chain" id="PRO_0000054548" description="Carbonyl reductase [NADPH] 2">
    <location>
        <begin position="1"/>
        <end position="244"/>
    </location>
</feature>
<feature type="active site" description="Proton acceptor" evidence="3">
    <location>
        <position position="149"/>
    </location>
</feature>
<feature type="binding site" evidence="1">
    <location>
        <begin position="11"/>
        <end position="39"/>
    </location>
    <ligand>
        <name>NADP(+)</name>
        <dbReference type="ChEBI" id="CHEBI:58349"/>
    </ligand>
</feature>
<feature type="binding site" evidence="1">
    <location>
        <position position="136"/>
    </location>
    <ligand>
        <name>substrate</name>
    </ligand>
</feature>
<feature type="modified residue" description="Phosphoserine" evidence="2">
    <location>
        <position position="176"/>
    </location>
</feature>
<comment type="function">
    <text evidence="1">May function in the pulmonary metabolism of endogenous carbonyl compounds, such as aliphatic aldehydes and ketones derived from lipid peroxidation, 3-ketosteroids and fatty aldehydes, as well as in xenobiotic metabolism.</text>
</comment>
<comment type="catalytic activity">
    <reaction>
        <text>a secondary alcohol + NADP(+) = a ketone + NADPH + H(+)</text>
        <dbReference type="Rhea" id="RHEA:19257"/>
        <dbReference type="ChEBI" id="CHEBI:15378"/>
        <dbReference type="ChEBI" id="CHEBI:17087"/>
        <dbReference type="ChEBI" id="CHEBI:35681"/>
        <dbReference type="ChEBI" id="CHEBI:57783"/>
        <dbReference type="ChEBI" id="CHEBI:58349"/>
        <dbReference type="EC" id="1.1.1.184"/>
    </reaction>
</comment>
<comment type="activity regulation">
    <text>Allosteric enzyme exhibiting negative cooperativity. Activated 2-5 fold by fatty acids.</text>
</comment>
<comment type="subunit">
    <text>Homotetramer.</text>
</comment>
<comment type="subcellular location">
    <subcellularLocation>
        <location evidence="1">Mitochondrion matrix</location>
    </subcellularLocation>
</comment>
<comment type="tissue specificity">
    <text>Lung (ciliated cells, non-ciliated bronchiolar cells and type-II alveolar pneumocytes). Low expression in all extrapulmonary tissues, including adipose tissue.</text>
</comment>
<comment type="induction">
    <text>By glucocorticoids.</text>
</comment>
<comment type="miscellaneous">
    <text>Uses both NADP and NAD as substrates. Has a strong preference for NADP.</text>
</comment>
<comment type="similarity">
    <text evidence="4">Belongs to the short-chain dehydrogenases/reductases (SDR) family.</text>
</comment>
<protein>
    <recommendedName>
        <fullName>Carbonyl reductase [NADPH] 2</fullName>
        <ecNumber>1.1.1.184</ecNumber>
    </recommendedName>
    <alternativeName>
        <fullName>Lung carbonyl reductase</fullName>
        <shortName>LCR</shortName>
    </alternativeName>
    <alternativeName>
        <fullName>NADPH-dependent carbonyl reductase 2</fullName>
    </alternativeName>
</protein>
<reference key="1">
    <citation type="journal article" date="1993" name="Biochem. Biophys. Res. Commun.">
        <title>Cloning and sequence analysis of a cDNA encoding tetrameric carbonyl reductase of pig lung.</title>
        <authorList>
            <person name="Nakanishi M."/>
            <person name="Deyashiki Y."/>
            <person name="Nakayama T."/>
            <person name="Sato T."/>
            <person name="Hara A."/>
        </authorList>
    </citation>
    <scope>NUCLEOTIDE SEQUENCE [MRNA]</scope>
    <scope>PARTIAL PROTEIN SEQUENCE</scope>
    <source>
        <tissue>Lung</tissue>
    </source>
</reference>
<reference key="2">
    <citation type="journal article" date="1992" name="Arch. Biochem. Biophys.">
        <title>Purification and characterization of pig lung carbonyl reductase.</title>
        <authorList>
            <person name="Oritani H."/>
            <person name="Deyashiki Y."/>
            <person name="Nakayama T."/>
            <person name="Hara A."/>
            <person name="Sawada H."/>
            <person name="Matsuura K."/>
            <person name="Bunai Y."/>
            <person name="Ohya I."/>
        </authorList>
    </citation>
    <scope>CHARACTERIZATION</scope>
</reference>
<dbReference type="EC" id="1.1.1.184"/>
<dbReference type="EMBL" id="D16511">
    <property type="protein sequence ID" value="BAA03963.1"/>
    <property type="molecule type" value="mRNA"/>
</dbReference>
<dbReference type="PIR" id="JN0703">
    <property type="entry name" value="JN0703"/>
</dbReference>
<dbReference type="RefSeq" id="NP_998992.1">
    <property type="nucleotide sequence ID" value="NM_213827.1"/>
</dbReference>
<dbReference type="SMR" id="Q29529"/>
<dbReference type="FunCoup" id="Q29529">
    <property type="interactions" value="774"/>
</dbReference>
<dbReference type="STRING" id="9823.ENSSSCP00000059411"/>
<dbReference type="PeptideAtlas" id="Q29529"/>
<dbReference type="GeneID" id="396780"/>
<dbReference type="KEGG" id="ssc:396780"/>
<dbReference type="CTD" id="12409"/>
<dbReference type="InParanoid" id="Q29529"/>
<dbReference type="OrthoDB" id="1393670at2759"/>
<dbReference type="Proteomes" id="UP000008227">
    <property type="component" value="Unplaced"/>
</dbReference>
<dbReference type="Proteomes" id="UP000314985">
    <property type="component" value="Unplaced"/>
</dbReference>
<dbReference type="Proteomes" id="UP000694570">
    <property type="component" value="Unplaced"/>
</dbReference>
<dbReference type="Proteomes" id="UP000694571">
    <property type="component" value="Unplaced"/>
</dbReference>
<dbReference type="Proteomes" id="UP000694720">
    <property type="component" value="Unplaced"/>
</dbReference>
<dbReference type="Proteomes" id="UP000694722">
    <property type="component" value="Unplaced"/>
</dbReference>
<dbReference type="Proteomes" id="UP000694723">
    <property type="component" value="Unplaced"/>
</dbReference>
<dbReference type="Proteomes" id="UP000694724">
    <property type="component" value="Unplaced"/>
</dbReference>
<dbReference type="Proteomes" id="UP000694725">
    <property type="component" value="Unplaced"/>
</dbReference>
<dbReference type="Proteomes" id="UP000694726">
    <property type="component" value="Unplaced"/>
</dbReference>
<dbReference type="Proteomes" id="UP000694727">
    <property type="component" value="Unplaced"/>
</dbReference>
<dbReference type="Proteomes" id="UP000694728">
    <property type="component" value="Unplaced"/>
</dbReference>
<dbReference type="GO" id="GO:0005759">
    <property type="term" value="C:mitochondrial matrix"/>
    <property type="evidence" value="ECO:0007669"/>
    <property type="project" value="UniProtKB-SubCell"/>
</dbReference>
<dbReference type="GO" id="GO:0004090">
    <property type="term" value="F:carbonyl reductase (NADPH) activity"/>
    <property type="evidence" value="ECO:0000318"/>
    <property type="project" value="GO_Central"/>
</dbReference>
<dbReference type="GO" id="GO:0050038">
    <property type="term" value="F:L-xylulose reductase (NADPH) activity"/>
    <property type="evidence" value="ECO:0000318"/>
    <property type="project" value="GO_Central"/>
</dbReference>
<dbReference type="GO" id="GO:0006006">
    <property type="term" value="P:glucose metabolic process"/>
    <property type="evidence" value="ECO:0000318"/>
    <property type="project" value="GO_Central"/>
</dbReference>
<dbReference type="GO" id="GO:0005997">
    <property type="term" value="P:xylulose metabolic process"/>
    <property type="evidence" value="ECO:0000318"/>
    <property type="project" value="GO_Central"/>
</dbReference>
<dbReference type="CDD" id="cd05351">
    <property type="entry name" value="XR_like_SDR_c"/>
    <property type="match status" value="1"/>
</dbReference>
<dbReference type="FunFam" id="3.40.50.720:FF:000214">
    <property type="entry name" value="L-xylulose reductase"/>
    <property type="match status" value="1"/>
</dbReference>
<dbReference type="Gene3D" id="3.40.50.720">
    <property type="entry name" value="NAD(P)-binding Rossmann-like Domain"/>
    <property type="match status" value="1"/>
</dbReference>
<dbReference type="InterPro" id="IPR051737">
    <property type="entry name" value="L-xylulose/Carbonyl_redctase"/>
</dbReference>
<dbReference type="InterPro" id="IPR036291">
    <property type="entry name" value="NAD(P)-bd_dom_sf"/>
</dbReference>
<dbReference type="InterPro" id="IPR020904">
    <property type="entry name" value="Sc_DH/Rdtase_CS"/>
</dbReference>
<dbReference type="InterPro" id="IPR002347">
    <property type="entry name" value="SDR_fam"/>
</dbReference>
<dbReference type="PANTHER" id="PTHR44252:SF1">
    <property type="entry name" value="CARBONYL REDUCTASE [NADPH] 2"/>
    <property type="match status" value="1"/>
</dbReference>
<dbReference type="PANTHER" id="PTHR44252">
    <property type="entry name" value="D-ERYTHRULOSE REDUCTASE"/>
    <property type="match status" value="1"/>
</dbReference>
<dbReference type="Pfam" id="PF13561">
    <property type="entry name" value="adh_short_C2"/>
    <property type="match status" value="1"/>
</dbReference>
<dbReference type="PRINTS" id="PR00081">
    <property type="entry name" value="GDHRDH"/>
</dbReference>
<dbReference type="PRINTS" id="PR00080">
    <property type="entry name" value="SDRFAMILY"/>
</dbReference>
<dbReference type="SUPFAM" id="SSF51735">
    <property type="entry name" value="NAD(P)-binding Rossmann-fold domains"/>
    <property type="match status" value="1"/>
</dbReference>
<dbReference type="PROSITE" id="PS00061">
    <property type="entry name" value="ADH_SHORT"/>
    <property type="match status" value="1"/>
</dbReference>
<name>CBR2_PIG</name>
<gene>
    <name type="primary">CBR2</name>
</gene>
<accession>Q29529</accession>
<evidence type="ECO:0000250" key="1"/>
<evidence type="ECO:0000250" key="2">
    <source>
        <dbReference type="UniProtKB" id="P08074"/>
    </source>
</evidence>
<evidence type="ECO:0000255" key="3">
    <source>
        <dbReference type="PROSITE-ProRule" id="PRU10001"/>
    </source>
</evidence>
<evidence type="ECO:0000305" key="4"/>